<sequence>MDLATIAFAFSLVLLSGLSTSIGGALAVGKREPGPKFMAAALGLSAGVMLYVSFMEILPEALKKLESTLGDEARATWTMMGAFFAGIAIITIIDRLVPEEINPHEPATTEEEARRKRLIKTGMFTAFALAIHNFPEGFATFLSGLEAPEIAIPVAVAIAIHNIPEGIAVAVPLRSATGSRKKAFWWATLSGLAEPLGALIGFALLMPFIGPMTFGISFAVIAGIMVFISLDELLPTAEETGEHHCAIYGLIAGMAVMAVSLALFI</sequence>
<feature type="chain" id="PRO_1000200392" description="Zinc transporter ZupT">
    <location>
        <begin position="1"/>
        <end position="265"/>
    </location>
</feature>
<feature type="transmembrane region" description="Helical" evidence="1">
    <location>
        <begin position="6"/>
        <end position="26"/>
    </location>
</feature>
<feature type="transmembrane region" description="Helical" evidence="1">
    <location>
        <begin position="37"/>
        <end position="57"/>
    </location>
</feature>
<feature type="transmembrane region" description="Helical" evidence="1">
    <location>
        <begin position="77"/>
        <end position="97"/>
    </location>
</feature>
<feature type="transmembrane region" description="Helical" evidence="1">
    <location>
        <begin position="122"/>
        <end position="142"/>
    </location>
</feature>
<feature type="transmembrane region" description="Helical" evidence="1">
    <location>
        <begin position="150"/>
        <end position="170"/>
    </location>
</feature>
<feature type="transmembrane region" description="Helical" evidence="1">
    <location>
        <begin position="184"/>
        <end position="204"/>
    </location>
</feature>
<feature type="transmembrane region" description="Helical" evidence="1">
    <location>
        <begin position="208"/>
        <end position="228"/>
    </location>
</feature>
<feature type="transmembrane region" description="Helical" evidence="1">
    <location>
        <begin position="245"/>
        <end position="265"/>
    </location>
</feature>
<feature type="binding site" description="M2 metal binding site" evidence="1">
    <location>
        <position position="133"/>
    </location>
    <ligand>
        <name>Fe(2+)</name>
        <dbReference type="ChEBI" id="CHEBI:29033"/>
    </ligand>
</feature>
<feature type="binding site" description="M2 metal binding site" evidence="1">
    <location>
        <position position="136"/>
    </location>
    <ligand>
        <name>Fe(2+)</name>
        <dbReference type="ChEBI" id="CHEBI:29033"/>
    </ligand>
</feature>
<feature type="binding site" description="M1 metal binding site" evidence="1">
    <location>
        <position position="136"/>
    </location>
    <ligand>
        <name>Zn(2+)</name>
        <dbReference type="ChEBI" id="CHEBI:29105"/>
    </ligand>
</feature>
<feature type="binding site" description="M1 metal binding site" evidence="1">
    <location>
        <position position="161"/>
    </location>
    <ligand>
        <name>Zn(2+)</name>
        <dbReference type="ChEBI" id="CHEBI:29105"/>
    </ligand>
</feature>
<feature type="binding site" description="M2 metal binding site" evidence="1">
    <location>
        <position position="162"/>
    </location>
    <ligand>
        <name>Fe(2+)</name>
        <dbReference type="ChEBI" id="CHEBI:29033"/>
    </ligand>
</feature>
<feature type="binding site" description="M2 metal binding site" evidence="1">
    <location>
        <position position="165"/>
    </location>
    <ligand>
        <name>Fe(2+)</name>
        <dbReference type="ChEBI" id="CHEBI:29033"/>
    </ligand>
</feature>
<feature type="binding site" description="M1 metal binding site" evidence="1">
    <location>
        <position position="165"/>
    </location>
    <ligand>
        <name>Zn(2+)</name>
        <dbReference type="ChEBI" id="CHEBI:29105"/>
    </ligand>
</feature>
<feature type="binding site" description="M2 metal binding site" evidence="1">
    <location>
        <position position="194"/>
    </location>
    <ligand>
        <name>Fe(2+)</name>
        <dbReference type="ChEBI" id="CHEBI:29033"/>
    </ligand>
</feature>
<name>ZUPT_CORA7</name>
<gene>
    <name evidence="1" type="primary">zupT</name>
    <name type="ordered locus">cauri_0972</name>
</gene>
<organism>
    <name type="scientific">Corynebacterium aurimucosum (strain ATCC 700975 / DSM 44827 / CIP 107346 / CN-1)</name>
    <name type="common">Corynebacterium nigricans</name>
    <dbReference type="NCBI Taxonomy" id="548476"/>
    <lineage>
        <taxon>Bacteria</taxon>
        <taxon>Bacillati</taxon>
        <taxon>Actinomycetota</taxon>
        <taxon>Actinomycetes</taxon>
        <taxon>Mycobacteriales</taxon>
        <taxon>Corynebacteriaceae</taxon>
        <taxon>Corynebacterium</taxon>
    </lineage>
</organism>
<proteinExistence type="inferred from homology"/>
<accession>C3PFG5</accession>
<evidence type="ECO:0000255" key="1">
    <source>
        <dbReference type="HAMAP-Rule" id="MF_00548"/>
    </source>
</evidence>
<keyword id="KW-1003">Cell membrane</keyword>
<keyword id="KW-0406">Ion transport</keyword>
<keyword id="KW-0408">Iron</keyword>
<keyword id="KW-0472">Membrane</keyword>
<keyword id="KW-0479">Metal-binding</keyword>
<keyword id="KW-1185">Reference proteome</keyword>
<keyword id="KW-0812">Transmembrane</keyword>
<keyword id="KW-1133">Transmembrane helix</keyword>
<keyword id="KW-0813">Transport</keyword>
<keyword id="KW-0862">Zinc</keyword>
<keyword id="KW-0864">Zinc transport</keyword>
<reference key="1">
    <citation type="journal article" date="2010" name="BMC Genomics">
        <title>Complete genome sequence and lifestyle of black-pigmented Corynebacterium aurimucosum ATCC 700975 (formerly C. nigricans CN-1) isolated from a vaginal swab of a woman with spontaneous abortion.</title>
        <authorList>
            <person name="Trost E."/>
            <person name="Gotker S."/>
            <person name="Schneider J."/>
            <person name="Schneiker-Bekel S."/>
            <person name="Szczepanowski R."/>
            <person name="Tilker A."/>
            <person name="Viehoever P."/>
            <person name="Arnold W."/>
            <person name="Bekel T."/>
            <person name="Blom J."/>
            <person name="Gartemann K.H."/>
            <person name="Linke B."/>
            <person name="Goesmann A."/>
            <person name="Puhler A."/>
            <person name="Shukla S.K."/>
            <person name="Tauch A."/>
        </authorList>
    </citation>
    <scope>NUCLEOTIDE SEQUENCE [LARGE SCALE GENOMIC DNA]</scope>
    <source>
        <strain>ATCC 700975 / DSM 44827 / CIP 107346 / CN-1</strain>
    </source>
</reference>
<dbReference type="EMBL" id="CP001601">
    <property type="protein sequence ID" value="ACP32569.1"/>
    <property type="molecule type" value="Genomic_DNA"/>
</dbReference>
<dbReference type="RefSeq" id="WP_010187284.1">
    <property type="nucleotide sequence ID" value="NC_012590.1"/>
</dbReference>
<dbReference type="SMR" id="C3PFG5"/>
<dbReference type="STRING" id="548476.cauri_0972"/>
<dbReference type="GeneID" id="31923598"/>
<dbReference type="KEGG" id="car:cauri_0972"/>
<dbReference type="eggNOG" id="COG0428">
    <property type="taxonomic scope" value="Bacteria"/>
</dbReference>
<dbReference type="HOGENOM" id="CLU_015114_1_3_11"/>
<dbReference type="OrthoDB" id="9787346at2"/>
<dbReference type="Proteomes" id="UP000002077">
    <property type="component" value="Chromosome"/>
</dbReference>
<dbReference type="GO" id="GO:0005886">
    <property type="term" value="C:plasma membrane"/>
    <property type="evidence" value="ECO:0007669"/>
    <property type="project" value="UniProtKB-SubCell"/>
</dbReference>
<dbReference type="GO" id="GO:0046872">
    <property type="term" value="F:metal ion binding"/>
    <property type="evidence" value="ECO:0007669"/>
    <property type="project" value="UniProtKB-KW"/>
</dbReference>
<dbReference type="GO" id="GO:0005385">
    <property type="term" value="F:zinc ion transmembrane transporter activity"/>
    <property type="evidence" value="ECO:0007669"/>
    <property type="project" value="UniProtKB-UniRule"/>
</dbReference>
<dbReference type="HAMAP" id="MF_00548">
    <property type="entry name" value="ZupT"/>
    <property type="match status" value="1"/>
</dbReference>
<dbReference type="InterPro" id="IPR003689">
    <property type="entry name" value="ZIP"/>
</dbReference>
<dbReference type="InterPro" id="IPR023498">
    <property type="entry name" value="Zn_transptr_ZupT"/>
</dbReference>
<dbReference type="NCBIfam" id="NF003243">
    <property type="entry name" value="PRK04201.1"/>
    <property type="match status" value="1"/>
</dbReference>
<dbReference type="PANTHER" id="PTHR11040:SF205">
    <property type="entry name" value="ZINC TRANSPORTER ZUPT"/>
    <property type="match status" value="1"/>
</dbReference>
<dbReference type="PANTHER" id="PTHR11040">
    <property type="entry name" value="ZINC/IRON TRANSPORTER"/>
    <property type="match status" value="1"/>
</dbReference>
<dbReference type="Pfam" id="PF02535">
    <property type="entry name" value="Zip"/>
    <property type="match status" value="1"/>
</dbReference>
<protein>
    <recommendedName>
        <fullName evidence="1">Zinc transporter ZupT</fullName>
    </recommendedName>
</protein>
<comment type="function">
    <text evidence="1">Mediates zinc uptake. May also transport other divalent cations.</text>
</comment>
<comment type="catalytic activity">
    <reaction evidence="1">
        <text>Zn(2+)(in) = Zn(2+)(out)</text>
        <dbReference type="Rhea" id="RHEA:29351"/>
        <dbReference type="ChEBI" id="CHEBI:29105"/>
    </reaction>
</comment>
<comment type="subcellular location">
    <subcellularLocation>
        <location evidence="1">Cell membrane</location>
        <topology evidence="1">Multi-pass membrane protein</topology>
    </subcellularLocation>
</comment>
<comment type="similarity">
    <text evidence="1">Belongs to the ZIP transporter (TC 2.A.5) family. ZupT subfamily.</text>
</comment>